<sequence>MARDLQNHLLFEVATEVTNRVGGIYSVLKSKAPVTVAQYGDNYTLLGPLNKATYESEVEKLDWEDESIFPEELLPIQKTLMSMREKGVNFVYGNWLIEGAPRVILFELDSVRHFLNEWKADLWSLVGIPSPEHDHETNDAILLGYVVVWFLGEVSKLDSSHAIIGHFHEWLAGVALPLCRKKRIDVVTIFTTHATLLGRYLCAAGDVDFYNNLQYFDVDQEAGKRGIYHRYCIERAAAHTADVFTTVSQITALEAEHLLKRKPDGILPNGLNVVKFQAVHEFQNLHALKKDKINDFVRGHFHGCFDFDLDNTVYFFIAGRYEYKNKGADMFIESLARLNYRLKVSGSKKTVVAFLIMPAKTNSFTVEALKSQAIVKSLENTVNEVTASIGKRIFEHTMRYPHNGLESELPTNLDELLKSSEKVLLKKRVLALRRPYGELPPVVTHNMCDDANDPILNQIRHVRLFNDSSDRVKVIFHPEFLNANNPILGLDYDEFVRGCHLGVFPSYYEPWGYTPAECTVMGVPSITTNVSGFGAYMEDLIETDQAKDYGIYIVDRRFKSPDESVEQLADYMEEFVNKTRRQRINQRNRTERLSDLLDWKRMGLEYVKARQLGLRRAYPEQFKQLVGETISDANMNTLAGGKKFKIARPLSVPGSPKVRSNSTVYMTPGDLGTLQDANNADDYFNLSTNGAIDNDDDDNDTSAYYEDN</sequence>
<gene>
    <name type="primary">GSY1</name>
    <name type="ordered locus">YFR015C</name>
</gene>
<proteinExistence type="evidence at protein level"/>
<protein>
    <recommendedName>
        <fullName>Glycogen [starch] synthase isoform 1</fullName>
        <ecNumber evidence="5">2.4.1.11</ecNumber>
    </recommendedName>
</protein>
<keyword id="KW-0021">Allosteric enzyme</keyword>
<keyword id="KW-0903">Direct protein sequencing</keyword>
<keyword id="KW-0320">Glycogen biosynthesis</keyword>
<keyword id="KW-0328">Glycosyltransferase</keyword>
<keyword id="KW-0597">Phosphoprotein</keyword>
<keyword id="KW-1185">Reference proteome</keyword>
<keyword id="KW-0808">Transferase</keyword>
<name>GYS1_YEAST</name>
<accession>P23337</accession>
<accession>D6VTP6</accession>
<comment type="function">
    <text evidence="5">Glycogen synthase participates in the glycogen biosynthetic process along with glycogenin and glycogen branching enzyme. Extends the primer composed of a few glucose units formed by glycogenin by adding new glucose units to it. In this context, glycogen synthase transfers the glycosyl residue from UDP-Glc to the non-reducing end of alpha-1,4-glucan.</text>
</comment>
<comment type="catalytic activity">
    <reaction evidence="5">
        <text>[(1-&gt;4)-alpha-D-glucosyl](n) + UDP-alpha-D-glucose = [(1-&gt;4)-alpha-D-glucosyl](n+1) + UDP + H(+)</text>
        <dbReference type="Rhea" id="RHEA:18549"/>
        <dbReference type="Rhea" id="RHEA-COMP:9584"/>
        <dbReference type="Rhea" id="RHEA-COMP:9587"/>
        <dbReference type="ChEBI" id="CHEBI:15378"/>
        <dbReference type="ChEBI" id="CHEBI:15444"/>
        <dbReference type="ChEBI" id="CHEBI:58223"/>
        <dbReference type="ChEBI" id="CHEBI:58885"/>
        <dbReference type="EC" id="2.4.1.11"/>
    </reaction>
    <physiologicalReaction direction="left-to-right" evidence="5">
        <dbReference type="Rhea" id="RHEA:18550"/>
    </physiologicalReaction>
</comment>
<comment type="activity regulation">
    <text evidence="7">Allosteric activation by glucose-6-phosphate, and phosphorylation by a cAMP-dependent kinase.</text>
</comment>
<comment type="pathway">
    <text evidence="7">Glycan biosynthesis; glycogen biosynthesis.</text>
</comment>
<comment type="interaction">
    <interactant intactId="EBI-8031">
        <id>P23337</id>
    </interactant>
    <interactant intactId="EBI-8036">
        <id>P27472</id>
        <label>GSY2</label>
    </interactant>
    <organismsDiffer>false</organismsDiffer>
    <experiments>4</experiments>
</comment>
<comment type="developmental stage">
    <text evidence="7">Activity increases just before cells entry in the stationary phase.</text>
</comment>
<comment type="induction">
    <text evidence="7">Synthesized in response to growth limitation.</text>
</comment>
<comment type="miscellaneous">
    <text evidence="4">Present with 6300 molecules/cell in log phase SD medium.</text>
</comment>
<comment type="similarity">
    <text evidence="6">Belongs to the glycosyltransferase 3 family.</text>
</comment>
<evidence type="ECO:0000250" key="1">
    <source>
        <dbReference type="UniProtKB" id="P13807"/>
    </source>
</evidence>
<evidence type="ECO:0000255" key="2"/>
<evidence type="ECO:0000256" key="3">
    <source>
        <dbReference type="SAM" id="MobiDB-lite"/>
    </source>
</evidence>
<evidence type="ECO:0000269" key="4">
    <source>
    </source>
</evidence>
<evidence type="ECO:0000269" key="5">
    <source>
    </source>
</evidence>
<evidence type="ECO:0000305" key="6"/>
<evidence type="ECO:0000305" key="7">
    <source>
    </source>
</evidence>
<evidence type="ECO:0007744" key="8">
    <source>
    </source>
</evidence>
<evidence type="ECO:0007744" key="9">
    <source>
    </source>
</evidence>
<evidence type="ECO:0007744" key="10">
    <source>
    </source>
</evidence>
<evidence type="ECO:0007744" key="11">
    <source>
    </source>
</evidence>
<evidence type="ECO:0007744" key="12">
    <source>
    </source>
</evidence>
<reference key="1">
    <citation type="journal article" date="1990" name="J. Biol. Chem.">
        <title>Isolation of the GSY1 gene encoding yeast glycogen synthase and evidence for the existence of a second gene.</title>
        <authorList>
            <person name="Farkas I."/>
            <person name="Hardy T.A."/>
            <person name="Depaoli-Roach A.A."/>
            <person name="Roach P.J."/>
        </authorList>
    </citation>
    <scope>NUCLEOTIDE SEQUENCE [GENOMIC DNA]</scope>
    <scope>PARTIAL PROTEIN SEQUENCE OF 2-17; 52-62; 86-105; 377-391; 593-600; 602-608 AND 660-669</scope>
    <scope>CLEAVAGE OF INITIATOR METHIONINE</scope>
    <scope>FUNCTION</scope>
    <scope>CATALYTIC ACTIVITY</scope>
    <source>
        <strain>YPH52</strain>
    </source>
</reference>
<reference key="2">
    <citation type="journal article" date="1995" name="Nat. Genet.">
        <title>Analysis of the nucleotide sequence of chromosome VI from Saccharomyces cerevisiae.</title>
        <authorList>
            <person name="Murakami Y."/>
            <person name="Naitou M."/>
            <person name="Hagiwara H."/>
            <person name="Shibata T."/>
            <person name="Ozawa M."/>
            <person name="Sasanuma S."/>
            <person name="Sasanuma M."/>
            <person name="Tsuchiya Y."/>
            <person name="Soeda E."/>
            <person name="Yokoyama K."/>
            <person name="Yamazaki M."/>
            <person name="Tashiro H."/>
            <person name="Eki T."/>
        </authorList>
    </citation>
    <scope>NUCLEOTIDE SEQUENCE [LARGE SCALE GENOMIC DNA]</scope>
    <source>
        <strain>ATCC 204508 / S288c</strain>
    </source>
</reference>
<reference key="3">
    <citation type="journal article" date="2014" name="G3 (Bethesda)">
        <title>The reference genome sequence of Saccharomyces cerevisiae: Then and now.</title>
        <authorList>
            <person name="Engel S.R."/>
            <person name="Dietrich F.S."/>
            <person name="Fisk D.G."/>
            <person name="Binkley G."/>
            <person name="Balakrishnan R."/>
            <person name="Costanzo M.C."/>
            <person name="Dwight S.S."/>
            <person name="Hitz B.C."/>
            <person name="Karra K."/>
            <person name="Nash R.S."/>
            <person name="Weng S."/>
            <person name="Wong E.D."/>
            <person name="Lloyd P."/>
            <person name="Skrzypek M.S."/>
            <person name="Miyasato S.R."/>
            <person name="Simison M."/>
            <person name="Cherry J.M."/>
        </authorList>
    </citation>
    <scope>GENOME REANNOTATION</scope>
    <source>
        <strain>ATCC 204508 / S288c</strain>
    </source>
</reference>
<reference key="4">
    <citation type="journal article" date="2003" name="Nature">
        <title>Global analysis of protein expression in yeast.</title>
        <authorList>
            <person name="Ghaemmaghami S."/>
            <person name="Huh W.-K."/>
            <person name="Bower K."/>
            <person name="Howson R.W."/>
            <person name="Belle A."/>
            <person name="Dephoure N."/>
            <person name="O'Shea E.K."/>
            <person name="Weissman J.S."/>
        </authorList>
    </citation>
    <scope>LEVEL OF PROTEIN EXPRESSION [LARGE SCALE ANALYSIS]</scope>
</reference>
<reference key="5">
    <citation type="journal article" date="2005" name="Mol. Cell. Proteomics">
        <title>Quantitative phosphoproteomics applied to the yeast pheromone signaling pathway.</title>
        <authorList>
            <person name="Gruhler A."/>
            <person name="Olsen J.V."/>
            <person name="Mohammed S."/>
            <person name="Mortensen P."/>
            <person name="Faergeman N.J."/>
            <person name="Mann M."/>
            <person name="Jensen O.N."/>
        </authorList>
    </citation>
    <scope>PHOSPHORYLATION [LARGE SCALE ANALYSIS] AT SER-655</scope>
    <scope>IDENTIFICATION BY MASS SPECTROMETRY [LARGE SCALE ANALYSIS]</scope>
    <source>
        <strain>YAL6B</strain>
    </source>
</reference>
<reference key="6">
    <citation type="journal article" date="2007" name="J. Proteome Res.">
        <title>Large-scale phosphorylation analysis of alpha-factor-arrested Saccharomyces cerevisiae.</title>
        <authorList>
            <person name="Li X."/>
            <person name="Gerber S.A."/>
            <person name="Rudner A.D."/>
            <person name="Beausoleil S.A."/>
            <person name="Haas W."/>
            <person name="Villen J."/>
            <person name="Elias J.E."/>
            <person name="Gygi S.P."/>
        </authorList>
    </citation>
    <scope>PHOSPHORYLATION [LARGE SCALE ANALYSIS] AT SER-651 AND SER-655</scope>
    <scope>IDENTIFICATION BY MASS SPECTROMETRY [LARGE SCALE ANALYSIS]</scope>
    <source>
        <strain>ADR376</strain>
    </source>
</reference>
<reference key="7">
    <citation type="journal article" date="2007" name="Proc. Natl. Acad. Sci. U.S.A.">
        <title>Analysis of phosphorylation sites on proteins from Saccharomyces cerevisiae by electron transfer dissociation (ETD) mass spectrometry.</title>
        <authorList>
            <person name="Chi A."/>
            <person name="Huttenhower C."/>
            <person name="Geer L.Y."/>
            <person name="Coon J.J."/>
            <person name="Syka J.E.P."/>
            <person name="Bai D.L."/>
            <person name="Shabanowitz J."/>
            <person name="Burke D.J."/>
            <person name="Troyanskaya O.G."/>
            <person name="Hunt D.F."/>
        </authorList>
    </citation>
    <scope>PHOSPHORYLATION [LARGE SCALE ANALYSIS] AT SER-651 AND SER-655</scope>
    <scope>IDENTIFICATION BY MASS SPECTROMETRY [LARGE SCALE ANALYSIS]</scope>
</reference>
<reference key="8">
    <citation type="journal article" date="2008" name="Mol. Cell. Proteomics">
        <title>A multidimensional chromatography technology for in-depth phosphoproteome analysis.</title>
        <authorList>
            <person name="Albuquerque C.P."/>
            <person name="Smolka M.B."/>
            <person name="Payne S.H."/>
            <person name="Bafna V."/>
            <person name="Eng J."/>
            <person name="Zhou H."/>
        </authorList>
    </citation>
    <scope>PHOSPHORYLATION [LARGE SCALE ANALYSIS] AT SER-651 AND SER-655</scope>
    <scope>IDENTIFICATION BY MASS SPECTROMETRY [LARGE SCALE ANALYSIS]</scope>
</reference>
<reference key="9">
    <citation type="journal article" date="2009" name="Science">
        <title>Global analysis of Cdk1 substrate phosphorylation sites provides insights into evolution.</title>
        <authorList>
            <person name="Holt L.J."/>
            <person name="Tuch B.B."/>
            <person name="Villen J."/>
            <person name="Johnson A.D."/>
            <person name="Gygi S.P."/>
            <person name="Morgan D.O."/>
        </authorList>
    </citation>
    <scope>PHOSPHORYLATION [LARGE SCALE ANALYSIS] AT SER-651 AND SER-655</scope>
    <scope>IDENTIFICATION BY MASS SPECTROMETRY [LARGE SCALE ANALYSIS]</scope>
</reference>
<dbReference type="EC" id="2.4.1.11" evidence="5"/>
<dbReference type="EMBL" id="M60919">
    <property type="protein sequence ID" value="AAA88715.1"/>
    <property type="molecule type" value="Genomic_DNA"/>
</dbReference>
<dbReference type="EMBL" id="D50617">
    <property type="protein sequence ID" value="BAA09254.1"/>
    <property type="molecule type" value="Genomic_DNA"/>
</dbReference>
<dbReference type="EMBL" id="BK006940">
    <property type="protein sequence ID" value="DAA12456.1"/>
    <property type="molecule type" value="Genomic_DNA"/>
</dbReference>
<dbReference type="PIR" id="A38326">
    <property type="entry name" value="A38326"/>
</dbReference>
<dbReference type="RefSeq" id="NP_116670.1">
    <property type="nucleotide sequence ID" value="NM_001179980.1"/>
</dbReference>
<dbReference type="SMR" id="P23337"/>
<dbReference type="BioGRID" id="31167">
    <property type="interactions" value="96"/>
</dbReference>
<dbReference type="DIP" id="DIP-5354N"/>
<dbReference type="FunCoup" id="P23337">
    <property type="interactions" value="521"/>
</dbReference>
<dbReference type="IntAct" id="P23337">
    <property type="interactions" value="20"/>
</dbReference>
<dbReference type="MINT" id="P23337"/>
<dbReference type="STRING" id="4932.YFR015C"/>
<dbReference type="CAZy" id="GT3">
    <property type="family name" value="Glycosyltransferase Family 3"/>
</dbReference>
<dbReference type="iPTMnet" id="P23337"/>
<dbReference type="PaxDb" id="4932-YFR015C"/>
<dbReference type="PeptideAtlas" id="P23337"/>
<dbReference type="DNASU" id="850569"/>
<dbReference type="EnsemblFungi" id="YFR015C_mRNA">
    <property type="protein sequence ID" value="YFR015C"/>
    <property type="gene ID" value="YFR015C"/>
</dbReference>
<dbReference type="GeneID" id="850569"/>
<dbReference type="KEGG" id="sce:YFR015C"/>
<dbReference type="AGR" id="SGD:S000001911"/>
<dbReference type="SGD" id="S000001911">
    <property type="gene designation" value="GSY1"/>
</dbReference>
<dbReference type="VEuPathDB" id="FungiDB:YFR015C"/>
<dbReference type="eggNOG" id="KOG3742">
    <property type="taxonomic scope" value="Eukaryota"/>
</dbReference>
<dbReference type="GeneTree" id="ENSGT00390000018612"/>
<dbReference type="HOGENOM" id="CLU_015910_1_0_1"/>
<dbReference type="InParanoid" id="P23337"/>
<dbReference type="OMA" id="RDVRNHI"/>
<dbReference type="OrthoDB" id="6335297at2759"/>
<dbReference type="BioCyc" id="YEAST:YFR015C-MONOMER"/>
<dbReference type="Reactome" id="R-SCE-3322077">
    <property type="pathway name" value="Glycogen synthesis"/>
</dbReference>
<dbReference type="UniPathway" id="UPA00164"/>
<dbReference type="BioGRID-ORCS" id="850569">
    <property type="hits" value="1 hit in 10 CRISPR screens"/>
</dbReference>
<dbReference type="PRO" id="PR:P23337"/>
<dbReference type="Proteomes" id="UP000002311">
    <property type="component" value="Chromosome VI"/>
</dbReference>
<dbReference type="RNAct" id="P23337">
    <property type="molecule type" value="protein"/>
</dbReference>
<dbReference type="GO" id="GO:0005737">
    <property type="term" value="C:cytoplasm"/>
    <property type="evidence" value="ECO:0007005"/>
    <property type="project" value="SGD"/>
</dbReference>
<dbReference type="GO" id="GO:0042587">
    <property type="term" value="C:glycogen granule"/>
    <property type="evidence" value="ECO:0000250"/>
    <property type="project" value="UniProtKB"/>
</dbReference>
<dbReference type="GO" id="GO:0005739">
    <property type="term" value="C:mitochondrion"/>
    <property type="evidence" value="ECO:0007005"/>
    <property type="project" value="SGD"/>
</dbReference>
<dbReference type="GO" id="GO:0004373">
    <property type="term" value="F:alpha-1,4-glucan glucosyltransferase (UDP-glucose donor) activity"/>
    <property type="evidence" value="ECO:0000314"/>
    <property type="project" value="SGD"/>
</dbReference>
<dbReference type="GO" id="GO:0005978">
    <property type="term" value="P:glycogen biosynthetic process"/>
    <property type="evidence" value="ECO:0000315"/>
    <property type="project" value="SGD"/>
</dbReference>
<dbReference type="FunFam" id="3.40.50.2000:FF:000014">
    <property type="entry name" value="Glycogen [starch] synthase"/>
    <property type="match status" value="1"/>
</dbReference>
<dbReference type="FunFam" id="3.40.50.2000:FF:000045">
    <property type="entry name" value="Glycogen [starch] synthase"/>
    <property type="match status" value="1"/>
</dbReference>
<dbReference type="Gene3D" id="3.40.50.2000">
    <property type="entry name" value="Glycogen Phosphorylase B"/>
    <property type="match status" value="2"/>
</dbReference>
<dbReference type="InterPro" id="IPR008631">
    <property type="entry name" value="Glycogen_synth"/>
</dbReference>
<dbReference type="PANTHER" id="PTHR10176:SF3">
    <property type="entry name" value="GLYCOGEN [STARCH] SYNTHASE"/>
    <property type="match status" value="1"/>
</dbReference>
<dbReference type="PANTHER" id="PTHR10176">
    <property type="entry name" value="GLYCOGEN SYNTHASE"/>
    <property type="match status" value="1"/>
</dbReference>
<dbReference type="Pfam" id="PF05693">
    <property type="entry name" value="Glycogen_syn"/>
    <property type="match status" value="1"/>
</dbReference>
<dbReference type="SUPFAM" id="SSF53756">
    <property type="entry name" value="UDP-Glycosyltransferase/glycogen phosphorylase"/>
    <property type="match status" value="2"/>
</dbReference>
<organism>
    <name type="scientific">Saccharomyces cerevisiae (strain ATCC 204508 / S288c)</name>
    <name type="common">Baker's yeast</name>
    <dbReference type="NCBI Taxonomy" id="559292"/>
    <lineage>
        <taxon>Eukaryota</taxon>
        <taxon>Fungi</taxon>
        <taxon>Dikarya</taxon>
        <taxon>Ascomycota</taxon>
        <taxon>Saccharomycotina</taxon>
        <taxon>Saccharomycetes</taxon>
        <taxon>Saccharomycetales</taxon>
        <taxon>Saccharomycetaceae</taxon>
        <taxon>Saccharomyces</taxon>
    </lineage>
</organism>
<feature type="initiator methionine" description="Removed" evidence="5">
    <location>
        <position position="1"/>
    </location>
</feature>
<feature type="chain" id="PRO_0000194773" description="Glycogen [starch] synthase isoform 1">
    <location>
        <begin position="2"/>
        <end position="708"/>
    </location>
</feature>
<feature type="region of interest" description="Disordered" evidence="3">
    <location>
        <begin position="687"/>
        <end position="708"/>
    </location>
</feature>
<feature type="compositionally biased region" description="Acidic residues" evidence="3">
    <location>
        <begin position="693"/>
        <end position="708"/>
    </location>
</feature>
<feature type="binding site" evidence="1">
    <location>
        <position position="20"/>
    </location>
    <ligand>
        <name>UDP</name>
        <dbReference type="ChEBI" id="CHEBI:58223"/>
    </ligand>
</feature>
<feature type="binding site" evidence="1">
    <location>
        <position position="193"/>
    </location>
    <ligand>
        <name>UDP-alpha-D-glucose</name>
        <dbReference type="ChEBI" id="CHEBI:58885"/>
    </ligand>
</feature>
<feature type="binding site" evidence="1">
    <location>
        <position position="199"/>
    </location>
    <ligand>
        <name>UDP-alpha-D-glucose</name>
        <dbReference type="ChEBI" id="CHEBI:58885"/>
    </ligand>
</feature>
<feature type="binding site" description="in other chain" evidence="1">
    <location>
        <position position="280"/>
    </location>
    <ligand>
        <name>alpha-D-glucose 6-phosphate</name>
        <dbReference type="ChEBI" id="CHEBI:58225"/>
        <note>allosteric activator; ligand shared between two neighboring subunits</note>
    </ligand>
</feature>
<feature type="binding site" description="in other chain" evidence="1">
    <location>
        <position position="281"/>
    </location>
    <ligand>
        <name>alpha-D-glucose 6-phosphate</name>
        <dbReference type="ChEBI" id="CHEBI:58225"/>
        <note>allosteric activator; ligand shared between two neighboring subunits</note>
    </ligand>
</feature>
<feature type="binding site" evidence="1">
    <location>
        <position position="283"/>
    </location>
    <ligand>
        <name>alpha-D-glucose 6-phosphate</name>
        <dbReference type="ChEBI" id="CHEBI:58225"/>
        <note>allosteric activator; ligand shared between two neighboring subunits</note>
    </ligand>
</feature>
<feature type="binding site" evidence="1">
    <location>
        <position position="286"/>
    </location>
    <ligand>
        <name>alpha-D-glucose 6-phosphate</name>
        <dbReference type="ChEBI" id="CHEBI:58225"/>
        <note>allosteric activator; ligand shared between two neighboring subunits</note>
    </ligand>
</feature>
<feature type="binding site" evidence="1">
    <location>
        <position position="290"/>
    </location>
    <ligand>
        <name>alpha-D-glucose 6-phosphate</name>
        <dbReference type="ChEBI" id="CHEBI:58225"/>
        <note>allosteric activator; ligand shared between two neighboring subunits</note>
    </ligand>
</feature>
<feature type="binding site" evidence="1">
    <location>
        <position position="320"/>
    </location>
    <ligand>
        <name>UDP</name>
        <dbReference type="ChEBI" id="CHEBI:58223"/>
    </ligand>
</feature>
<feature type="binding site" evidence="1">
    <location>
        <position position="320"/>
    </location>
    <ligand>
        <name>UDP-alpha-D-glucose</name>
        <dbReference type="ChEBI" id="CHEBI:58885"/>
    </ligand>
</feature>
<feature type="binding site" evidence="1">
    <location>
        <position position="500"/>
    </location>
    <ligand>
        <name>alpha-D-glucose 6-phosphate</name>
        <dbReference type="ChEBI" id="CHEBI:58225"/>
        <note>allosteric activator; ligand shared between two neighboring subunits</note>
    </ligand>
</feature>
<feature type="binding site" evidence="1">
    <location>
        <position position="509"/>
    </location>
    <ligand>
        <name>UDP-alpha-D-glucose</name>
        <dbReference type="ChEBI" id="CHEBI:58885"/>
    </ligand>
</feature>
<feature type="binding site" evidence="1">
    <location>
        <position position="511"/>
    </location>
    <ligand>
        <name>UDP-alpha-D-glucose</name>
        <dbReference type="ChEBI" id="CHEBI:58885"/>
    </ligand>
</feature>
<feature type="binding site" evidence="1">
    <location>
        <position position="512"/>
    </location>
    <ligand>
        <name>UDP-alpha-D-glucose</name>
        <dbReference type="ChEBI" id="CHEBI:58885"/>
    </ligand>
</feature>
<feature type="binding site" evidence="1">
    <location>
        <position position="514"/>
    </location>
    <ligand>
        <name>UDP</name>
        <dbReference type="ChEBI" id="CHEBI:58223"/>
    </ligand>
</feature>
<feature type="binding site" evidence="1">
    <location>
        <position position="583"/>
    </location>
    <ligand>
        <name>alpha-D-glucose 6-phosphate</name>
        <dbReference type="ChEBI" id="CHEBI:58225"/>
        <note>allosteric activator; ligand shared between two neighboring subunits</note>
    </ligand>
</feature>
<feature type="binding site" evidence="1">
    <location>
        <position position="587"/>
    </location>
    <ligand>
        <name>alpha-D-glucose 6-phosphate</name>
        <dbReference type="ChEBI" id="CHEBI:58225"/>
        <note>allosteric activator; ligand shared between two neighboring subunits</note>
    </ligand>
</feature>
<feature type="modified residue" description="Phosphoserine" evidence="2">
    <location>
        <position position="159"/>
    </location>
</feature>
<feature type="modified residue" description="Phosphoserine" evidence="2">
    <location>
        <position position="363"/>
    </location>
</feature>
<feature type="modified residue" description="Phosphoserine" evidence="2">
    <location>
        <position position="560"/>
    </location>
</feature>
<feature type="modified residue" description="Phosphoserine" evidence="9 10 11 12">
    <location>
        <position position="651"/>
    </location>
</feature>
<feature type="modified residue" description="Phosphoserine" evidence="8 9 10 11 12">
    <location>
        <position position="655"/>
    </location>
</feature>
<feature type="modified residue" description="Phosphoserine; by PKA" evidence="2">
    <location>
        <position position="660"/>
    </location>
</feature>
<feature type="modified residue" description="Phosphoserine; by PKA" evidence="2">
    <location>
        <position position="662"/>
    </location>
</feature>